<feature type="chain" id="PRO_0000381726" description="Biotin synthase">
    <location>
        <begin position="1"/>
        <end position="345"/>
    </location>
</feature>
<feature type="domain" description="Radical SAM core" evidence="2">
    <location>
        <begin position="38"/>
        <end position="256"/>
    </location>
</feature>
<feature type="binding site" evidence="1">
    <location>
        <position position="53"/>
    </location>
    <ligand>
        <name>[4Fe-4S] cluster</name>
        <dbReference type="ChEBI" id="CHEBI:49883"/>
        <note>4Fe-4S-S-AdoMet</note>
    </ligand>
</feature>
<feature type="binding site" evidence="1">
    <location>
        <position position="57"/>
    </location>
    <ligand>
        <name>[4Fe-4S] cluster</name>
        <dbReference type="ChEBI" id="CHEBI:49883"/>
        <note>4Fe-4S-S-AdoMet</note>
    </ligand>
</feature>
<feature type="binding site" evidence="1">
    <location>
        <position position="60"/>
    </location>
    <ligand>
        <name>[4Fe-4S] cluster</name>
        <dbReference type="ChEBI" id="CHEBI:49883"/>
        <note>4Fe-4S-S-AdoMet</note>
    </ligand>
</feature>
<feature type="binding site" evidence="1">
    <location>
        <position position="97"/>
    </location>
    <ligand>
        <name>[2Fe-2S] cluster</name>
        <dbReference type="ChEBI" id="CHEBI:190135"/>
    </ligand>
</feature>
<feature type="binding site" evidence="1">
    <location>
        <position position="128"/>
    </location>
    <ligand>
        <name>[2Fe-2S] cluster</name>
        <dbReference type="ChEBI" id="CHEBI:190135"/>
    </ligand>
</feature>
<feature type="binding site" evidence="1">
    <location>
        <position position="188"/>
    </location>
    <ligand>
        <name>[2Fe-2S] cluster</name>
        <dbReference type="ChEBI" id="CHEBI:190135"/>
    </ligand>
</feature>
<feature type="binding site" evidence="1">
    <location>
        <position position="260"/>
    </location>
    <ligand>
        <name>[2Fe-2S] cluster</name>
        <dbReference type="ChEBI" id="CHEBI:190135"/>
    </ligand>
</feature>
<reference key="1">
    <citation type="submission" date="2007-02" db="EMBL/GenBank/DDBJ databases">
        <title>Complete sequence of chromosome of Yersinia pestis Pestoides F.</title>
        <authorList>
            <consortium name="US DOE Joint Genome Institute"/>
            <person name="Copeland A."/>
            <person name="Lucas S."/>
            <person name="Lapidus A."/>
            <person name="Barry K."/>
            <person name="Detter J.C."/>
            <person name="Glavina del Rio T."/>
            <person name="Hammon N."/>
            <person name="Israni S."/>
            <person name="Dalin E."/>
            <person name="Tice H."/>
            <person name="Pitluck S."/>
            <person name="Di Bartolo G."/>
            <person name="Chain P."/>
            <person name="Malfatti S."/>
            <person name="Shin M."/>
            <person name="Vergez L."/>
            <person name="Schmutz J."/>
            <person name="Larimer F."/>
            <person name="Land M."/>
            <person name="Hauser L."/>
            <person name="Worsham P."/>
            <person name="Chu M."/>
            <person name="Bearden S."/>
            <person name="Garcia E."/>
            <person name="Richardson P."/>
        </authorList>
    </citation>
    <scope>NUCLEOTIDE SEQUENCE [LARGE SCALE GENOMIC DNA]</scope>
    <source>
        <strain>Pestoides F</strain>
    </source>
</reference>
<dbReference type="EC" id="2.8.1.6" evidence="1"/>
<dbReference type="EMBL" id="CP000668">
    <property type="protein sequence ID" value="ABP40918.1"/>
    <property type="molecule type" value="Genomic_DNA"/>
</dbReference>
<dbReference type="RefSeq" id="WP_002210762.1">
    <property type="nucleotide sequence ID" value="NZ_CP009715.1"/>
</dbReference>
<dbReference type="SMR" id="A4TNQ6"/>
<dbReference type="GeneID" id="57977290"/>
<dbReference type="KEGG" id="ypp:YPDSF_2546"/>
<dbReference type="PATRIC" id="fig|386656.14.peg.4064"/>
<dbReference type="UniPathway" id="UPA00078">
    <property type="reaction ID" value="UER00162"/>
</dbReference>
<dbReference type="GO" id="GO:0051537">
    <property type="term" value="F:2 iron, 2 sulfur cluster binding"/>
    <property type="evidence" value="ECO:0007669"/>
    <property type="project" value="UniProtKB-KW"/>
</dbReference>
<dbReference type="GO" id="GO:0051539">
    <property type="term" value="F:4 iron, 4 sulfur cluster binding"/>
    <property type="evidence" value="ECO:0007669"/>
    <property type="project" value="UniProtKB-KW"/>
</dbReference>
<dbReference type="GO" id="GO:0004076">
    <property type="term" value="F:biotin synthase activity"/>
    <property type="evidence" value="ECO:0007669"/>
    <property type="project" value="UniProtKB-UniRule"/>
</dbReference>
<dbReference type="GO" id="GO:0005506">
    <property type="term" value="F:iron ion binding"/>
    <property type="evidence" value="ECO:0007669"/>
    <property type="project" value="UniProtKB-UniRule"/>
</dbReference>
<dbReference type="GO" id="GO:0009102">
    <property type="term" value="P:biotin biosynthetic process"/>
    <property type="evidence" value="ECO:0007669"/>
    <property type="project" value="UniProtKB-UniRule"/>
</dbReference>
<dbReference type="CDD" id="cd01335">
    <property type="entry name" value="Radical_SAM"/>
    <property type="match status" value="1"/>
</dbReference>
<dbReference type="FunFam" id="3.20.20.70:FF:000011">
    <property type="entry name" value="Biotin synthase"/>
    <property type="match status" value="1"/>
</dbReference>
<dbReference type="Gene3D" id="3.20.20.70">
    <property type="entry name" value="Aldolase class I"/>
    <property type="match status" value="1"/>
</dbReference>
<dbReference type="HAMAP" id="MF_01694">
    <property type="entry name" value="BioB"/>
    <property type="match status" value="1"/>
</dbReference>
<dbReference type="InterPro" id="IPR013785">
    <property type="entry name" value="Aldolase_TIM"/>
</dbReference>
<dbReference type="InterPro" id="IPR010722">
    <property type="entry name" value="BATS_dom"/>
</dbReference>
<dbReference type="InterPro" id="IPR002684">
    <property type="entry name" value="Biotin_synth/BioAB"/>
</dbReference>
<dbReference type="InterPro" id="IPR024177">
    <property type="entry name" value="Biotin_synthase"/>
</dbReference>
<dbReference type="InterPro" id="IPR006638">
    <property type="entry name" value="Elp3/MiaA/NifB-like_rSAM"/>
</dbReference>
<dbReference type="InterPro" id="IPR007197">
    <property type="entry name" value="rSAM"/>
</dbReference>
<dbReference type="NCBIfam" id="TIGR00433">
    <property type="entry name" value="bioB"/>
    <property type="match status" value="1"/>
</dbReference>
<dbReference type="PANTHER" id="PTHR22976">
    <property type="entry name" value="BIOTIN SYNTHASE"/>
    <property type="match status" value="1"/>
</dbReference>
<dbReference type="PANTHER" id="PTHR22976:SF2">
    <property type="entry name" value="BIOTIN SYNTHASE, MITOCHONDRIAL"/>
    <property type="match status" value="1"/>
</dbReference>
<dbReference type="Pfam" id="PF06968">
    <property type="entry name" value="BATS"/>
    <property type="match status" value="1"/>
</dbReference>
<dbReference type="Pfam" id="PF04055">
    <property type="entry name" value="Radical_SAM"/>
    <property type="match status" value="1"/>
</dbReference>
<dbReference type="PIRSF" id="PIRSF001619">
    <property type="entry name" value="Biotin_synth"/>
    <property type="match status" value="1"/>
</dbReference>
<dbReference type="SFLD" id="SFLDF00272">
    <property type="entry name" value="biotin_synthase"/>
    <property type="match status" value="1"/>
</dbReference>
<dbReference type="SFLD" id="SFLDS00029">
    <property type="entry name" value="Radical_SAM"/>
    <property type="match status" value="1"/>
</dbReference>
<dbReference type="SMART" id="SM00876">
    <property type="entry name" value="BATS"/>
    <property type="match status" value="1"/>
</dbReference>
<dbReference type="SMART" id="SM00729">
    <property type="entry name" value="Elp3"/>
    <property type="match status" value="1"/>
</dbReference>
<dbReference type="SUPFAM" id="SSF102114">
    <property type="entry name" value="Radical SAM enzymes"/>
    <property type="match status" value="1"/>
</dbReference>
<dbReference type="PROSITE" id="PS51918">
    <property type="entry name" value="RADICAL_SAM"/>
    <property type="match status" value="1"/>
</dbReference>
<keyword id="KW-0001">2Fe-2S</keyword>
<keyword id="KW-0004">4Fe-4S</keyword>
<keyword id="KW-0093">Biotin biosynthesis</keyword>
<keyword id="KW-0408">Iron</keyword>
<keyword id="KW-0411">Iron-sulfur</keyword>
<keyword id="KW-0479">Metal-binding</keyword>
<keyword id="KW-0949">S-adenosyl-L-methionine</keyword>
<keyword id="KW-0808">Transferase</keyword>
<accession>A4TNQ6</accession>
<protein>
    <recommendedName>
        <fullName evidence="1">Biotin synthase</fullName>
        <ecNumber evidence="1">2.8.1.6</ecNumber>
    </recommendedName>
</protein>
<organism>
    <name type="scientific">Yersinia pestis (strain Pestoides F)</name>
    <dbReference type="NCBI Taxonomy" id="386656"/>
    <lineage>
        <taxon>Bacteria</taxon>
        <taxon>Pseudomonadati</taxon>
        <taxon>Pseudomonadota</taxon>
        <taxon>Gammaproteobacteria</taxon>
        <taxon>Enterobacterales</taxon>
        <taxon>Yersiniaceae</taxon>
        <taxon>Yersinia</taxon>
    </lineage>
</organism>
<evidence type="ECO:0000255" key="1">
    <source>
        <dbReference type="HAMAP-Rule" id="MF_01694"/>
    </source>
</evidence>
<evidence type="ECO:0000255" key="2">
    <source>
        <dbReference type="PROSITE-ProRule" id="PRU01266"/>
    </source>
</evidence>
<proteinExistence type="inferred from homology"/>
<comment type="function">
    <text evidence="1">Catalyzes the conversion of dethiobiotin (DTB) to biotin by the insertion of a sulfur atom into dethiobiotin via a radical-based mechanism.</text>
</comment>
<comment type="catalytic activity">
    <reaction evidence="1">
        <text>(4R,5S)-dethiobiotin + (sulfur carrier)-SH + 2 reduced [2Fe-2S]-[ferredoxin] + 2 S-adenosyl-L-methionine = (sulfur carrier)-H + biotin + 2 5'-deoxyadenosine + 2 L-methionine + 2 oxidized [2Fe-2S]-[ferredoxin]</text>
        <dbReference type="Rhea" id="RHEA:22060"/>
        <dbReference type="Rhea" id="RHEA-COMP:10000"/>
        <dbReference type="Rhea" id="RHEA-COMP:10001"/>
        <dbReference type="Rhea" id="RHEA-COMP:14737"/>
        <dbReference type="Rhea" id="RHEA-COMP:14739"/>
        <dbReference type="ChEBI" id="CHEBI:17319"/>
        <dbReference type="ChEBI" id="CHEBI:29917"/>
        <dbReference type="ChEBI" id="CHEBI:33737"/>
        <dbReference type="ChEBI" id="CHEBI:33738"/>
        <dbReference type="ChEBI" id="CHEBI:57586"/>
        <dbReference type="ChEBI" id="CHEBI:57844"/>
        <dbReference type="ChEBI" id="CHEBI:59789"/>
        <dbReference type="ChEBI" id="CHEBI:64428"/>
        <dbReference type="ChEBI" id="CHEBI:149473"/>
        <dbReference type="EC" id="2.8.1.6"/>
    </reaction>
</comment>
<comment type="cofactor">
    <cofactor evidence="1">
        <name>[4Fe-4S] cluster</name>
        <dbReference type="ChEBI" id="CHEBI:49883"/>
    </cofactor>
    <text evidence="1">Binds 1 [4Fe-4S] cluster. The cluster is coordinated with 3 cysteines and an exchangeable S-adenosyl-L-methionine.</text>
</comment>
<comment type="cofactor">
    <cofactor evidence="1">
        <name>[2Fe-2S] cluster</name>
        <dbReference type="ChEBI" id="CHEBI:190135"/>
    </cofactor>
    <text evidence="1">Binds 1 [2Fe-2S] cluster. The cluster is coordinated with 3 cysteines and 1 arginine.</text>
</comment>
<comment type="pathway">
    <text evidence="1">Cofactor biosynthesis; biotin biosynthesis; biotin from 7,8-diaminononanoate: step 2/2.</text>
</comment>
<comment type="subunit">
    <text evidence="1">Homodimer.</text>
</comment>
<comment type="similarity">
    <text evidence="1">Belongs to the radical SAM superfamily. Biotin synthase family.</text>
</comment>
<sequence length="345" mass="38378">MATYHHWTVGQALALFDKPLLELLFEAQQVHRQHFDPRQVQVSTLLSIKTGACPEDCKYCPQSSRYKTGLESERLMQVEQVLESAKKAKAAGSTRFCMGAAWKNPHERDMPYLAKMVEGVKALGMETCMTLGSLSKQQAHRLADAGLDYYNHNLDTSPEFYGSIITTRSYQERLDTLNEVRDAGIKVCSGGIVGLGETVRDRAGLLVQLANLPKPPESVPINMLVKVKGTPLENNAEVDAFEFIRTIAVARIMMPSSYVRLSAGREQMNEQTQAMCFMAGANSIFYGCKLLTTPNPDEDKDLQLFRKLGLNPQQTATSHGDREQQQALTEQLLHGDTAQFYNAAV</sequence>
<gene>
    <name evidence="1" type="primary">bioB</name>
    <name type="ordered locus">YPDSF_2546</name>
</gene>
<name>BIOB_YERPP</name>